<evidence type="ECO:0000250" key="1"/>
<evidence type="ECO:0000250" key="2">
    <source>
        <dbReference type="UniProtKB" id="Q9FIJ0"/>
    </source>
</evidence>
<evidence type="ECO:0000255" key="3"/>
<evidence type="ECO:0000255" key="4">
    <source>
        <dbReference type="PROSITE-ProRule" id="PRU00448"/>
    </source>
</evidence>
<evidence type="ECO:0000255" key="5">
    <source>
        <dbReference type="PROSITE-ProRule" id="PRU00716"/>
    </source>
</evidence>
<evidence type="ECO:0000269" key="6">
    <source>
    </source>
</evidence>
<evidence type="ECO:0000269" key="7">
    <source>
    </source>
</evidence>
<evidence type="ECO:0000269" key="8">
    <source>
    </source>
</evidence>
<evidence type="ECO:0000269" key="9">
    <source>
    </source>
</evidence>
<evidence type="ECO:0000269" key="10">
    <source>
    </source>
</evidence>
<evidence type="ECO:0000269" key="11">
    <source>
    </source>
</evidence>
<evidence type="ECO:0000269" key="12">
    <source>
    </source>
</evidence>
<evidence type="ECO:0000269" key="13">
    <source>
    </source>
</evidence>
<evidence type="ECO:0000269" key="14">
    <source>
    </source>
</evidence>
<evidence type="ECO:0000305" key="15"/>
<evidence type="ECO:0000305" key="16">
    <source>
    </source>
</evidence>
<protein>
    <recommendedName>
        <fullName>Respiratory burst oxidase homolog protein F</fullName>
        <ecNumber>1.11.1.-</ecNumber>
        <ecNumber>1.6.3.-</ecNumber>
    </recommendedName>
    <alternativeName>
        <fullName>Cytochrome b245 beta chain homolog RbohAp108</fullName>
    </alternativeName>
    <alternativeName>
        <fullName>NADPH oxidase RBOHF</fullName>
        <shortName>AtRBOHF</shortName>
    </alternativeName>
</protein>
<organism>
    <name type="scientific">Arabidopsis thaliana</name>
    <name type="common">Mouse-ear cress</name>
    <dbReference type="NCBI Taxonomy" id="3702"/>
    <lineage>
        <taxon>Eukaryota</taxon>
        <taxon>Viridiplantae</taxon>
        <taxon>Streptophyta</taxon>
        <taxon>Embryophyta</taxon>
        <taxon>Tracheophyta</taxon>
        <taxon>Spermatophyta</taxon>
        <taxon>Magnoliopsida</taxon>
        <taxon>eudicotyledons</taxon>
        <taxon>Gunneridae</taxon>
        <taxon>Pentapetalae</taxon>
        <taxon>rosids</taxon>
        <taxon>malvids</taxon>
        <taxon>Brassicales</taxon>
        <taxon>Brassicaceae</taxon>
        <taxon>Camelineae</taxon>
        <taxon>Arabidopsis</taxon>
    </lineage>
</organism>
<comment type="function">
    <text evidence="6 7 8 9 10">Calcium-dependent NADPH oxidase that generates superoxide. Generates reactive oxygen species (ROS) during incompatible interactions with pathogens and is important in the regulation of the hypersensitive response (HR). Involved in abscisic acid-induced stomatal closing and in UV-B and abscisic acid ROS-dependent signaling.</text>
</comment>
<comment type="activity regulation">
    <text evidence="10">Inhibited by diphenylene iodonium (DPI).</text>
</comment>
<comment type="subunit">
    <text evidence="1 11 12">Monomer and homodimer (By similarity). Interacts (via N-terminus) with CIPK26 (PubMed:23335733). Interacts (via N-terminus) with SRC2 (PubMed:23872431).</text>
</comment>
<comment type="interaction">
    <interactant intactId="EBI-7197253">
        <id>O48538</id>
    </interactant>
    <interactant intactId="EBI-782514">
        <id>Q940H6</id>
        <label>SRK2E</label>
    </interactant>
    <organismsDiffer>false</organismsDiffer>
    <experiments>4</experiments>
</comment>
<comment type="subcellular location">
    <subcellularLocation>
        <location evidence="11 13">Cell membrane</location>
        <topology evidence="11 13">Multi-pass membrane protein</topology>
    </subcellularLocation>
</comment>
<comment type="tissue specificity">
    <text evidence="7 13 14">Expressed in roots, stems, seedlings, inflorescences, leaves and guard cells.</text>
</comment>
<comment type="induction">
    <text evidence="7">Up-regulated by abscisic acid.</text>
</comment>
<comment type="PTM">
    <text evidence="11">Not glycosylated. Phosphorylated by CIPK26.</text>
</comment>
<comment type="similarity">
    <text evidence="15">Belongs to the RBOH (TC 5.B.1.3) family.</text>
</comment>
<comment type="caution">
    <text evidence="16">Was originally called RBOHA.</text>
</comment>
<comment type="sequence caution" evidence="15">
    <conflict type="erroneous gene model prediction">
        <sequence resource="EMBL-CDS" id="AAF24574"/>
    </conflict>
</comment>
<comment type="sequence caution" evidence="15">
    <conflict type="miscellaneous discrepancy">
        <sequence resource="EMBL-CDS" id="BAF00352"/>
    </conflict>
    <text>Intron retention.</text>
</comment>
<dbReference type="EC" id="1.11.1.-"/>
<dbReference type="EC" id="1.6.3.-"/>
<dbReference type="EMBL" id="AB008111">
    <property type="protein sequence ID" value="BAA28953.1"/>
    <property type="molecule type" value="mRNA"/>
</dbReference>
<dbReference type="EMBL" id="AF015301">
    <property type="protein sequence ID" value="AAB87789.1"/>
    <property type="molecule type" value="mRNA"/>
</dbReference>
<dbReference type="EMBL" id="AC007764">
    <property type="protein sequence ID" value="AAF24574.1"/>
    <property type="status" value="ALT_SEQ"/>
    <property type="molecule type" value="Genomic_DNA"/>
</dbReference>
<dbReference type="EMBL" id="CP002684">
    <property type="protein sequence ID" value="AEE34186.1"/>
    <property type="molecule type" value="Genomic_DNA"/>
</dbReference>
<dbReference type="EMBL" id="AK228418">
    <property type="protein sequence ID" value="BAF00352.1"/>
    <property type="status" value="ALT_SEQ"/>
    <property type="molecule type" value="mRNA"/>
</dbReference>
<dbReference type="PIR" id="T03826">
    <property type="entry name" value="T03826"/>
</dbReference>
<dbReference type="SMR" id="O48538"/>
<dbReference type="BioGRID" id="27931">
    <property type="interactions" value="3"/>
</dbReference>
<dbReference type="FunCoup" id="O48538">
    <property type="interactions" value="684"/>
</dbReference>
<dbReference type="IntAct" id="O48538">
    <property type="interactions" value="1"/>
</dbReference>
<dbReference type="MINT" id="O48538"/>
<dbReference type="STRING" id="3702.O48538"/>
<dbReference type="TCDB" id="5.B.1.1.9">
    <property type="family name" value="the phagocyte (gp91(phox)) nadph oxidase family"/>
</dbReference>
<dbReference type="iPTMnet" id="O48538"/>
<dbReference type="PaxDb" id="3702-AT1G64060.1"/>
<dbReference type="ProteomicsDB" id="225975"/>
<dbReference type="EnsemblPlants" id="AT1G64060.1">
    <property type="protein sequence ID" value="AT1G64060.1"/>
    <property type="gene ID" value="AT1G64060"/>
</dbReference>
<dbReference type="GeneID" id="842710"/>
<dbReference type="Gramene" id="AT1G64060.1">
    <property type="protein sequence ID" value="AT1G64060.1"/>
    <property type="gene ID" value="AT1G64060"/>
</dbReference>
<dbReference type="KEGG" id="ath:AT1G64060"/>
<dbReference type="Araport" id="AT1G64060"/>
<dbReference type="TAIR" id="AT1G64060">
    <property type="gene designation" value="RBOH F"/>
</dbReference>
<dbReference type="eggNOG" id="KOG0039">
    <property type="taxonomic scope" value="Eukaryota"/>
</dbReference>
<dbReference type="HOGENOM" id="CLU_005646_6_0_1"/>
<dbReference type="InParanoid" id="O48538"/>
<dbReference type="OMA" id="WFVVPGC"/>
<dbReference type="OrthoDB" id="167398at2759"/>
<dbReference type="PhylomeDB" id="O48538"/>
<dbReference type="BioCyc" id="ARA:AT1G64060-MONOMER"/>
<dbReference type="PRO" id="PR:O48538"/>
<dbReference type="Proteomes" id="UP000006548">
    <property type="component" value="Chromosome 1"/>
</dbReference>
<dbReference type="ExpressionAtlas" id="O48538">
    <property type="expression patterns" value="baseline and differential"/>
</dbReference>
<dbReference type="GO" id="GO:0005886">
    <property type="term" value="C:plasma membrane"/>
    <property type="evidence" value="ECO:0007669"/>
    <property type="project" value="UniProtKB-SubCell"/>
</dbReference>
<dbReference type="GO" id="GO:0005509">
    <property type="term" value="F:calcium ion binding"/>
    <property type="evidence" value="ECO:0007669"/>
    <property type="project" value="InterPro"/>
</dbReference>
<dbReference type="GO" id="GO:0016174">
    <property type="term" value="F:NAD(P)H oxidase H2O2-forming activity"/>
    <property type="evidence" value="ECO:0000315"/>
    <property type="project" value="TAIR"/>
</dbReference>
<dbReference type="GO" id="GO:0004601">
    <property type="term" value="F:peroxidase activity"/>
    <property type="evidence" value="ECO:0007669"/>
    <property type="project" value="UniProtKB-KW"/>
</dbReference>
<dbReference type="GO" id="GO:0009738">
    <property type="term" value="P:abscisic acid-activated signaling pathway"/>
    <property type="evidence" value="ECO:0000304"/>
    <property type="project" value="TAIR"/>
</dbReference>
<dbReference type="GO" id="GO:0033500">
    <property type="term" value="P:carbohydrate homeostasis"/>
    <property type="evidence" value="ECO:0000315"/>
    <property type="project" value="TAIR"/>
</dbReference>
<dbReference type="GO" id="GO:0052542">
    <property type="term" value="P:defense response by callose deposition"/>
    <property type="evidence" value="ECO:0000315"/>
    <property type="project" value="TAIR"/>
</dbReference>
<dbReference type="GO" id="GO:0009873">
    <property type="term" value="P:ethylene-activated signaling pathway"/>
    <property type="evidence" value="ECO:0000304"/>
    <property type="project" value="TAIR"/>
</dbReference>
<dbReference type="GO" id="GO:0050665">
    <property type="term" value="P:hydrogen peroxide biosynthetic process"/>
    <property type="evidence" value="ECO:0000315"/>
    <property type="project" value="TAIR"/>
</dbReference>
<dbReference type="GO" id="GO:0043069">
    <property type="term" value="P:negative regulation of programmed cell death"/>
    <property type="evidence" value="ECO:0000315"/>
    <property type="project" value="TAIR"/>
</dbReference>
<dbReference type="GO" id="GO:0007231">
    <property type="term" value="P:osmosensory signaling pathway"/>
    <property type="evidence" value="ECO:0000315"/>
    <property type="project" value="TAIR"/>
</dbReference>
<dbReference type="GO" id="GO:0010119">
    <property type="term" value="P:regulation of stomatal movement"/>
    <property type="evidence" value="ECO:0000315"/>
    <property type="project" value="TAIR"/>
</dbReference>
<dbReference type="GO" id="GO:0002679">
    <property type="term" value="P:respiratory burst involved in defense response"/>
    <property type="evidence" value="ECO:0000315"/>
    <property type="project" value="TAIR"/>
</dbReference>
<dbReference type="GO" id="GO:0009723">
    <property type="term" value="P:response to ethylene"/>
    <property type="evidence" value="ECO:0000315"/>
    <property type="project" value="TAIR"/>
</dbReference>
<dbReference type="CDD" id="cd06186">
    <property type="entry name" value="NOX_Duox_like_FAD_NADP"/>
    <property type="match status" value="1"/>
</dbReference>
<dbReference type="FunFam" id="1.10.238.10:FF:000049">
    <property type="entry name" value="Respiratory burst oxidase homolog A"/>
    <property type="match status" value="1"/>
</dbReference>
<dbReference type="FunFam" id="2.40.30.10:FF:000019">
    <property type="entry name" value="Respiratory burst oxidase homolog A"/>
    <property type="match status" value="1"/>
</dbReference>
<dbReference type="FunFam" id="3.40.50.80:FF:000007">
    <property type="entry name" value="Respiratory burst oxidase protein A"/>
    <property type="match status" value="1"/>
</dbReference>
<dbReference type="Gene3D" id="1.10.238.10">
    <property type="entry name" value="EF-hand"/>
    <property type="match status" value="1"/>
</dbReference>
<dbReference type="Gene3D" id="3.40.50.80">
    <property type="entry name" value="Nucleotide-binding domain of ferredoxin-NADP reductase (FNR) module"/>
    <property type="match status" value="1"/>
</dbReference>
<dbReference type="Gene3D" id="2.40.30.10">
    <property type="entry name" value="Translation factors"/>
    <property type="match status" value="1"/>
</dbReference>
<dbReference type="InterPro" id="IPR000778">
    <property type="entry name" value="Cyt_b245_heavy_chain"/>
</dbReference>
<dbReference type="InterPro" id="IPR011992">
    <property type="entry name" value="EF-hand-dom_pair"/>
</dbReference>
<dbReference type="InterPro" id="IPR018247">
    <property type="entry name" value="EF_Hand_1_Ca_BS"/>
</dbReference>
<dbReference type="InterPro" id="IPR002048">
    <property type="entry name" value="EF_hand_dom"/>
</dbReference>
<dbReference type="InterPro" id="IPR013112">
    <property type="entry name" value="FAD-bd_8"/>
</dbReference>
<dbReference type="InterPro" id="IPR017927">
    <property type="entry name" value="FAD-bd_FR_type"/>
</dbReference>
<dbReference type="InterPro" id="IPR013130">
    <property type="entry name" value="Fe3_Rdtase_TM_dom"/>
</dbReference>
<dbReference type="InterPro" id="IPR013121">
    <property type="entry name" value="Fe_red_NAD-bd_6"/>
</dbReference>
<dbReference type="InterPro" id="IPR039261">
    <property type="entry name" value="FNR_nucleotide-bd"/>
</dbReference>
<dbReference type="InterPro" id="IPR013623">
    <property type="entry name" value="NADPH_Ox"/>
</dbReference>
<dbReference type="InterPro" id="IPR050369">
    <property type="entry name" value="RBOH/FRE"/>
</dbReference>
<dbReference type="InterPro" id="IPR017938">
    <property type="entry name" value="Riboflavin_synthase-like_b-brl"/>
</dbReference>
<dbReference type="PANTHER" id="PTHR11972">
    <property type="entry name" value="NADPH OXIDASE"/>
    <property type="match status" value="1"/>
</dbReference>
<dbReference type="PANTHER" id="PTHR11972:SF153">
    <property type="entry name" value="SUPEROXIDE-GENERATING NADPH OXIDASE HEAVY CHAIN SUBUNIT A"/>
    <property type="match status" value="1"/>
</dbReference>
<dbReference type="Pfam" id="PF08022">
    <property type="entry name" value="FAD_binding_8"/>
    <property type="match status" value="1"/>
</dbReference>
<dbReference type="Pfam" id="PF01794">
    <property type="entry name" value="Ferric_reduct"/>
    <property type="match status" value="1"/>
</dbReference>
<dbReference type="Pfam" id="PF08030">
    <property type="entry name" value="NAD_binding_6"/>
    <property type="match status" value="1"/>
</dbReference>
<dbReference type="Pfam" id="PF08414">
    <property type="entry name" value="NADPH_Ox"/>
    <property type="match status" value="1"/>
</dbReference>
<dbReference type="PRINTS" id="PR00466">
    <property type="entry name" value="GP91PHOX"/>
</dbReference>
<dbReference type="SFLD" id="SFLDG01169">
    <property type="entry name" value="NADPH_oxidase_subgroup_(NOX)"/>
    <property type="match status" value="1"/>
</dbReference>
<dbReference type="SUPFAM" id="SSF47473">
    <property type="entry name" value="EF-hand"/>
    <property type="match status" value="1"/>
</dbReference>
<dbReference type="SUPFAM" id="SSF52343">
    <property type="entry name" value="Ferredoxin reductase-like, C-terminal NADP-linked domain"/>
    <property type="match status" value="1"/>
</dbReference>
<dbReference type="SUPFAM" id="SSF63380">
    <property type="entry name" value="Riboflavin synthase domain-like"/>
    <property type="match status" value="1"/>
</dbReference>
<dbReference type="PROSITE" id="PS00018">
    <property type="entry name" value="EF_HAND_1"/>
    <property type="match status" value="1"/>
</dbReference>
<dbReference type="PROSITE" id="PS50222">
    <property type="entry name" value="EF_HAND_2"/>
    <property type="match status" value="1"/>
</dbReference>
<dbReference type="PROSITE" id="PS51384">
    <property type="entry name" value="FAD_FR"/>
    <property type="match status" value="1"/>
</dbReference>
<gene>
    <name type="primary">RBOHF</name>
    <name type="synonym">RBOHAP108</name>
    <name type="ordered locus">At1g64060</name>
    <name type="ORF">F22C12.18</name>
</gene>
<name>RBOHF_ARATH</name>
<keyword id="KW-0106">Calcium</keyword>
<keyword id="KW-1003">Cell membrane</keyword>
<keyword id="KW-0175">Coiled coil</keyword>
<keyword id="KW-0903">Direct protein sequencing</keyword>
<keyword id="KW-0274">FAD</keyword>
<keyword id="KW-0285">Flavoprotein</keyword>
<keyword id="KW-0472">Membrane</keyword>
<keyword id="KW-0479">Metal-binding</keyword>
<keyword id="KW-0521">NADP</keyword>
<keyword id="KW-0560">Oxidoreductase</keyword>
<keyword id="KW-0575">Peroxidase</keyword>
<keyword id="KW-0597">Phosphoprotein</keyword>
<keyword id="KW-1185">Reference proteome</keyword>
<keyword id="KW-0677">Repeat</keyword>
<keyword id="KW-0812">Transmembrane</keyword>
<keyword id="KW-1133">Transmembrane helix</keyword>
<proteinExistence type="evidence at protein level"/>
<accession>O48538</accession>
<accession>O80342</accession>
<accession>Q0WR97</accession>
<accession>Q9SH56</accession>
<sequence>MKPFSKNDRRRWSFDSVSAGKTAVGSASTSPGTEYSINGDQEFVEVTIDLQDDDTIVLRSVEPATAINVIGDISDDNTGIMTPVSISRSPTMKRTSSNRFRQFSQELKAEAVAKAKQLSQELKRFSWSRSFSGNLTTTSTAANQSGGAGGGLVNSALEARALRKQRAQLDRTRSSAQRALRGLRFISNKQKNVDGWNDVQSNFEKFEKNGYIYRSDFAQCIGMKDSKEFALELFDALSRRRRLKVEKINHDELYEYWSQINDESFDSRLQIFFDIVDKNEDGRITEEEVKEIIMLSASANKLSRLKEQAEEYAALIMEELDPERLGYIELWQLETLLLQKDTYLNYSQALSYTSQALSQNLQGLRGKSRIHRMSSDFVYIMQENWKRIWVLSLWIMIMIGLFLWKFFQYKQKDAFHVMGYCLLTAKGAAETLKFNMALILFPVCRNTITWLRSTRLSYFVPFDDNINFHKTIAGAIVVAVILHIGDHLACDFPRIVRATEYDYNRYLFHYFQTKQPTYFDLVKGPEGITGILMVILMIISFTLATRWFRRNLVKLPKPFDRLTGFNAFWYSHHLFVIVYILLILHGIFLYFAKPWYVRTTWMYLAVPVLLYGGERTLRYFRSGSYSVRLLKVAIYPGNVLTLQMSKPTQFRYKSGQYMFVQCPAVSPFEWHPFSITSAPEDDYISIHIRQLGDWTQELKRVFSEVCEPPVGGKSGLLRADETTKKSLPKLLIDGPYGAPAQDYRKYDVLLLVGLGIGATPFISILKDLLNNIVKMEEHADSISDFSRSSEYSTGSNGDTPRRKRILKTTNAYFYWVTREQGSFDWFKGVMNEVAELDQRGVIEMHNYLTSVYEEGDARSALITMVQALNHAKNGVDIVSGTRVRTHFARPNWKKVLTKLSSKHCNARIGVFYCGVPVLGKELSKLCNTFNQKGSTKFEFHKEHF</sequence>
<feature type="initiator methionine" description="Removed" evidence="13">
    <location>
        <position position="1"/>
    </location>
</feature>
<feature type="chain" id="PRO_0000313758" description="Respiratory burst oxidase homolog protein F">
    <location>
        <begin position="2"/>
        <end position="944"/>
    </location>
</feature>
<feature type="topological domain" description="Cytoplasmic" evidence="3">
    <location>
        <begin position="2"/>
        <end position="387"/>
    </location>
</feature>
<feature type="transmembrane region" description="Helical; Name=1" evidence="3">
    <location>
        <begin position="388"/>
        <end position="408"/>
    </location>
</feature>
<feature type="topological domain" description="Extracellular" evidence="3">
    <location>
        <begin position="409"/>
        <end position="475"/>
    </location>
</feature>
<feature type="transmembrane region" description="Helical; Name=2" evidence="1">
    <location>
        <begin position="476"/>
        <end position="492"/>
    </location>
</feature>
<feature type="topological domain" description="Cytoplasmic" evidence="3">
    <location>
        <begin position="493"/>
        <end position="527"/>
    </location>
</feature>
<feature type="transmembrane region" description="Helical; Name=3" evidence="3">
    <location>
        <begin position="528"/>
        <end position="548"/>
    </location>
</feature>
<feature type="topological domain" description="Extracellular" evidence="3">
    <location>
        <begin position="549"/>
        <end position="570"/>
    </location>
</feature>
<feature type="transmembrane region" description="Helical; Name=4" evidence="3">
    <location>
        <begin position="571"/>
        <end position="591"/>
    </location>
</feature>
<feature type="topological domain" description="Cytoplasmic" evidence="3">
    <location>
        <begin position="592"/>
        <end position="599"/>
    </location>
</feature>
<feature type="transmembrane region" description="Helical; Name=5" evidence="3">
    <location>
        <begin position="600"/>
        <end position="617"/>
    </location>
</feature>
<feature type="topological domain" description="Extracellular" evidence="3">
    <location>
        <begin position="618"/>
        <end position="744"/>
    </location>
</feature>
<feature type="transmembrane region" description="Helical; Name=6" evidence="3">
    <location>
        <begin position="745"/>
        <end position="765"/>
    </location>
</feature>
<feature type="topological domain" description="Cytoplasmic" evidence="3">
    <location>
        <begin position="766"/>
        <end position="944"/>
    </location>
</feature>
<feature type="domain" description="EF-hand 1" evidence="4">
    <location>
        <begin position="264"/>
        <end position="299"/>
    </location>
</feature>
<feature type="domain" description="EF-hand 2" evidence="15">
    <location>
        <begin position="308"/>
        <end position="343"/>
    </location>
</feature>
<feature type="domain" description="Ferric oxidoreductase">
    <location>
        <begin position="426"/>
        <end position="583"/>
    </location>
</feature>
<feature type="domain" description="FAD-binding FR-type" evidence="5">
    <location>
        <begin position="622"/>
        <end position="742"/>
    </location>
</feature>
<feature type="region of interest" description="EF-hand-like 1" evidence="1">
    <location>
        <begin position="207"/>
        <end position="215"/>
    </location>
</feature>
<feature type="region of interest" description="EF-hand-like 2" evidence="1">
    <location>
        <begin position="241"/>
        <end position="252"/>
    </location>
</feature>
<feature type="coiled-coil region" evidence="3">
    <location>
        <begin position="102"/>
        <end position="126"/>
    </location>
</feature>
<feature type="coiled-coil region" evidence="3">
    <location>
        <begin position="157"/>
        <end position="184"/>
    </location>
</feature>
<feature type="binding site" evidence="4">
    <location>
        <position position="277"/>
    </location>
    <ligand>
        <name>Ca(2+)</name>
        <dbReference type="ChEBI" id="CHEBI:29108"/>
        <label>1</label>
    </ligand>
</feature>
<feature type="binding site" evidence="4">
    <location>
        <position position="279"/>
    </location>
    <ligand>
        <name>Ca(2+)</name>
        <dbReference type="ChEBI" id="CHEBI:29108"/>
        <label>1</label>
    </ligand>
</feature>
<feature type="binding site" evidence="4">
    <location>
        <position position="281"/>
    </location>
    <ligand>
        <name>Ca(2+)</name>
        <dbReference type="ChEBI" id="CHEBI:29108"/>
        <label>1</label>
    </ligand>
</feature>
<feature type="binding site" evidence="4">
    <location>
        <position position="283"/>
    </location>
    <ligand>
        <name>Ca(2+)</name>
        <dbReference type="ChEBI" id="CHEBI:29108"/>
        <label>1</label>
    </ligand>
</feature>
<feature type="binding site" evidence="4">
    <location>
        <position position="288"/>
    </location>
    <ligand>
        <name>Ca(2+)</name>
        <dbReference type="ChEBI" id="CHEBI:29108"/>
        <label>1</label>
    </ligand>
</feature>
<feature type="binding site" evidence="15">
    <location>
        <position position="321"/>
    </location>
    <ligand>
        <name>Ca(2+)</name>
        <dbReference type="ChEBI" id="CHEBI:29108"/>
        <label>2</label>
    </ligand>
</feature>
<feature type="binding site" evidence="15">
    <location>
        <position position="327"/>
    </location>
    <ligand>
        <name>Ca(2+)</name>
        <dbReference type="ChEBI" id="CHEBI:29108"/>
        <label>2</label>
    </ligand>
</feature>
<feature type="modified residue" description="Phosphoserine" evidence="2">
    <location>
        <position position="354"/>
    </location>
</feature>
<feature type="modified residue" description="Phosphoserine" evidence="2">
    <location>
        <position position="358"/>
    </location>
</feature>
<feature type="sequence conflict" description="In Ref. 1; BAA28953." evidence="15" ref="1">
    <original>I</original>
    <variation>T</variation>
    <location>
        <position position="908"/>
    </location>
</feature>
<reference key="1">
    <citation type="journal article" date="1998" name="Plant J.">
        <title>Six Arabidopsis thaliana homologues of the human respiratory burst oxidase (gp91phox).</title>
        <authorList>
            <person name="Torres M.A."/>
            <person name="Onouchi H."/>
            <person name="Hamada S."/>
            <person name="Machida C."/>
            <person name="Hammond-Kosack K.E."/>
            <person name="Jones J.D.G."/>
        </authorList>
    </citation>
    <scope>NUCLEOTIDE SEQUENCE [MRNA]</scope>
    <scope>TISSUE SPECIFICITY</scope>
    <source>
        <strain>cv. Landsberg erecta</strain>
    </source>
</reference>
<reference key="2">
    <citation type="journal article" date="1998" name="Plant Cell">
        <title>A plant homolog of the neutrophil NADPH oxidase gp91phox subunit gene encodes a plasma membrane protein with Ca2+ binding motifs.</title>
        <authorList>
            <person name="Keller T."/>
            <person name="Damude H.G."/>
            <person name="Werner D."/>
            <person name="Doerner P."/>
            <person name="Dixon R.A."/>
            <person name="Lamb C."/>
        </authorList>
    </citation>
    <scope>NUCLEOTIDE SEQUENCE [MRNA]</scope>
    <scope>PROTEIN SEQUENCE OF 2-3</scope>
    <scope>TISSUE SPECIFICITY</scope>
    <scope>SUBCELLULAR LOCATION</scope>
    <scope>CALCIUM-BINDING DATA</scope>
    <scope>LACK OF GLYCOSYLATION</scope>
    <source>
        <strain>cv. Columbia</strain>
    </source>
</reference>
<reference key="3">
    <citation type="journal article" date="2000" name="Nature">
        <title>Sequence and analysis of chromosome 1 of the plant Arabidopsis thaliana.</title>
        <authorList>
            <person name="Theologis A."/>
            <person name="Ecker J.R."/>
            <person name="Palm C.J."/>
            <person name="Federspiel N.A."/>
            <person name="Kaul S."/>
            <person name="White O."/>
            <person name="Alonso J."/>
            <person name="Altafi H."/>
            <person name="Araujo R."/>
            <person name="Bowman C.L."/>
            <person name="Brooks S.Y."/>
            <person name="Buehler E."/>
            <person name="Chan A."/>
            <person name="Chao Q."/>
            <person name="Chen H."/>
            <person name="Cheuk R.F."/>
            <person name="Chin C.W."/>
            <person name="Chung M.K."/>
            <person name="Conn L."/>
            <person name="Conway A.B."/>
            <person name="Conway A.R."/>
            <person name="Creasy T.H."/>
            <person name="Dewar K."/>
            <person name="Dunn P."/>
            <person name="Etgu P."/>
            <person name="Feldblyum T.V."/>
            <person name="Feng J.-D."/>
            <person name="Fong B."/>
            <person name="Fujii C.Y."/>
            <person name="Gill J.E."/>
            <person name="Goldsmith A.D."/>
            <person name="Haas B."/>
            <person name="Hansen N.F."/>
            <person name="Hughes B."/>
            <person name="Huizar L."/>
            <person name="Hunter J.L."/>
            <person name="Jenkins J."/>
            <person name="Johnson-Hopson C."/>
            <person name="Khan S."/>
            <person name="Khaykin E."/>
            <person name="Kim C.J."/>
            <person name="Koo H.L."/>
            <person name="Kremenetskaia I."/>
            <person name="Kurtz D.B."/>
            <person name="Kwan A."/>
            <person name="Lam B."/>
            <person name="Langin-Hooper S."/>
            <person name="Lee A."/>
            <person name="Lee J.M."/>
            <person name="Lenz C.A."/>
            <person name="Li J.H."/>
            <person name="Li Y.-P."/>
            <person name="Lin X."/>
            <person name="Liu S.X."/>
            <person name="Liu Z.A."/>
            <person name="Luros J.S."/>
            <person name="Maiti R."/>
            <person name="Marziali A."/>
            <person name="Militscher J."/>
            <person name="Miranda M."/>
            <person name="Nguyen M."/>
            <person name="Nierman W.C."/>
            <person name="Osborne B.I."/>
            <person name="Pai G."/>
            <person name="Peterson J."/>
            <person name="Pham P.K."/>
            <person name="Rizzo M."/>
            <person name="Rooney T."/>
            <person name="Rowley D."/>
            <person name="Sakano H."/>
            <person name="Salzberg S.L."/>
            <person name="Schwartz J.R."/>
            <person name="Shinn P."/>
            <person name="Southwick A.M."/>
            <person name="Sun H."/>
            <person name="Tallon L.J."/>
            <person name="Tambunga G."/>
            <person name="Toriumi M.J."/>
            <person name="Town C.D."/>
            <person name="Utterback T."/>
            <person name="Van Aken S."/>
            <person name="Vaysberg M."/>
            <person name="Vysotskaia V.S."/>
            <person name="Walker M."/>
            <person name="Wu D."/>
            <person name="Yu G."/>
            <person name="Fraser C.M."/>
            <person name="Venter J.C."/>
            <person name="Davis R.W."/>
        </authorList>
    </citation>
    <scope>NUCLEOTIDE SEQUENCE [LARGE SCALE GENOMIC DNA]</scope>
    <source>
        <strain>cv. Columbia</strain>
    </source>
</reference>
<reference key="4">
    <citation type="journal article" date="2017" name="Plant J.">
        <title>Araport11: a complete reannotation of the Arabidopsis thaliana reference genome.</title>
        <authorList>
            <person name="Cheng C.Y."/>
            <person name="Krishnakumar V."/>
            <person name="Chan A.P."/>
            <person name="Thibaud-Nissen F."/>
            <person name="Schobel S."/>
            <person name="Town C.D."/>
        </authorList>
    </citation>
    <scope>GENOME REANNOTATION</scope>
    <source>
        <strain>cv. Columbia</strain>
    </source>
</reference>
<reference key="5">
    <citation type="submission" date="2006-07" db="EMBL/GenBank/DDBJ databases">
        <title>Large-scale analysis of RIKEN Arabidopsis full-length (RAFL) cDNAs.</title>
        <authorList>
            <person name="Totoki Y."/>
            <person name="Seki M."/>
            <person name="Ishida J."/>
            <person name="Nakajima M."/>
            <person name="Enju A."/>
            <person name="Kamiya A."/>
            <person name="Narusaka M."/>
            <person name="Shin-i T."/>
            <person name="Nakagawa M."/>
            <person name="Sakamoto N."/>
            <person name="Oishi K."/>
            <person name="Kohara Y."/>
            <person name="Kobayashi M."/>
            <person name="Toyoda A."/>
            <person name="Sakaki Y."/>
            <person name="Sakurai T."/>
            <person name="Iida K."/>
            <person name="Akiyama K."/>
            <person name="Satou M."/>
            <person name="Toyoda T."/>
            <person name="Konagaya A."/>
            <person name="Carninci P."/>
            <person name="Kawai J."/>
            <person name="Hayashizaki Y."/>
            <person name="Shinozaki K."/>
        </authorList>
    </citation>
    <scope>NUCLEOTIDE SEQUENCE [LARGE SCALE MRNA]</scope>
    <source>
        <strain>cv. Columbia</strain>
    </source>
</reference>
<reference key="6">
    <citation type="journal article" date="2002" name="Proc. Natl. Acad. Sci. U.S.A.">
        <title>Arabidopsis gp91phox homologues AtrbohD and AtrbohF are required for accumulation of reactive oxygen intermediates in the plant defense response.</title>
        <authorList>
            <person name="Torres M.A."/>
            <person name="Dangl J.L."/>
            <person name="Jones J.D.G."/>
        </authorList>
    </citation>
    <scope>FUNCTION</scope>
</reference>
<reference key="7">
    <citation type="journal article" date="2003" name="EMBO J.">
        <title>NADPH oxidase AtrbohD and AtrbohF genes function in ROS-dependent ABA signaling in Arabidopsis.</title>
        <authorList>
            <person name="Kwak J.M."/>
            <person name="Mori I.C."/>
            <person name="Pei Z.-M."/>
            <person name="Leonhardt N."/>
            <person name="Torres M.A."/>
            <person name="Dangl J.L."/>
            <person name="Bloom R.E."/>
            <person name="Bodde S."/>
            <person name="Jones J.D.G."/>
            <person name="Schroeder J.I."/>
        </authorList>
    </citation>
    <scope>FUNCTION</scope>
    <scope>INDUCTION BY ABSCISIC ACID</scope>
    <scope>TISSUE SPECIFICITY</scope>
</reference>
<reference key="8">
    <citation type="journal article" date="2006" name="Plant J.">
        <title>Ethylene-induced stomatal closure in Arabidopsis occurs via AtrbohF-mediated hydrogen peroxide synthesis.</title>
        <authorList>
            <person name="Desikan R."/>
            <person name="Last K."/>
            <person name="Harrett-Williams R."/>
            <person name="Tagliavia C."/>
            <person name="Harter K."/>
            <person name="Hooley R."/>
            <person name="Hancock J.T."/>
            <person name="Neill S.J."/>
        </authorList>
    </citation>
    <scope>FUNCTION</scope>
    <scope>ACTIVITY REGULATION</scope>
</reference>
<reference key="9">
    <citation type="journal article" date="2006" name="Plant Cell Environ.">
        <title>The role of NADPH oxidase and MAP kinase phosphatase in UV-B-dependent gene expression in Arabidopsis.</title>
        <authorList>
            <person name="Kalbina I."/>
            <person name="Strid A."/>
        </authorList>
    </citation>
    <scope>FUNCTION</scope>
</reference>
<reference key="10">
    <citation type="journal article" date="2006" name="Plant Physiol.">
        <title>Extracellular ATP induces the accumulation of superoxide via NADPH oxidases in Arabidopsis.</title>
        <authorList>
            <person name="Song C.J."/>
            <person name="Steinebrunner I."/>
            <person name="Wang X."/>
            <person name="Stout S.C."/>
            <person name="Roux S.J."/>
        </authorList>
    </citation>
    <scope>FUNCTION</scope>
</reference>
<reference key="11">
    <citation type="journal article" date="2006" name="Plant Physiol.">
        <title>Production of reactive oxygen species by plant NADPH oxidases.</title>
        <authorList>
            <person name="Sagi M."/>
            <person name="Fluhr R."/>
        </authorList>
    </citation>
    <scope>GENE FAMILY</scope>
    <scope>NOMENCLATURE</scope>
</reference>
<reference key="12">
    <citation type="journal article" date="2013" name="Biochim. Biophys. Acta">
        <title>A low temperature-inducible protein AtSRC2 enhances the ROS-producing activity of NADPH oxidase AtRbohF.</title>
        <authorList>
            <person name="Kawarazaki T."/>
            <person name="Kimura S."/>
            <person name="Iizuka A."/>
            <person name="Hanamata S."/>
            <person name="Nibori H."/>
            <person name="Michikawa M."/>
            <person name="Imai A."/>
            <person name="Abe M."/>
            <person name="Kaya H."/>
            <person name="Kuchitsu K."/>
        </authorList>
    </citation>
    <scope>INTERACTION WITH SRC2</scope>
</reference>
<reference key="13">
    <citation type="journal article" date="2013" name="Mol. Plant">
        <title>The Calcineurin B-like calcium sensors CBL1 and CBL9 together with their interacting protein kinase CIPK26 regulate the Arabidopsis NADPH oxidase RBOHF.</title>
        <authorList>
            <person name="Drerup M.M."/>
            <person name="Schluecking K."/>
            <person name="Hashimoto K."/>
            <person name="Manishankar P."/>
            <person name="Steinhorst L."/>
            <person name="Kuchitsu K."/>
            <person name="Kudla J."/>
        </authorList>
    </citation>
    <scope>INTERACTION WITH CIPK26</scope>
    <scope>PHOSPHORYLATION</scope>
    <scope>SUBCELLULAR LOCATION</scope>
</reference>